<reference key="1">
    <citation type="journal article" date="2009" name="PLoS Genet.">
        <title>Organised genome dynamics in the Escherichia coli species results in highly diverse adaptive paths.</title>
        <authorList>
            <person name="Touchon M."/>
            <person name="Hoede C."/>
            <person name="Tenaillon O."/>
            <person name="Barbe V."/>
            <person name="Baeriswyl S."/>
            <person name="Bidet P."/>
            <person name="Bingen E."/>
            <person name="Bonacorsi S."/>
            <person name="Bouchier C."/>
            <person name="Bouvet O."/>
            <person name="Calteau A."/>
            <person name="Chiapello H."/>
            <person name="Clermont O."/>
            <person name="Cruveiller S."/>
            <person name="Danchin A."/>
            <person name="Diard M."/>
            <person name="Dossat C."/>
            <person name="Karoui M.E."/>
            <person name="Frapy E."/>
            <person name="Garry L."/>
            <person name="Ghigo J.M."/>
            <person name="Gilles A.M."/>
            <person name="Johnson J."/>
            <person name="Le Bouguenec C."/>
            <person name="Lescat M."/>
            <person name="Mangenot S."/>
            <person name="Martinez-Jehanne V."/>
            <person name="Matic I."/>
            <person name="Nassif X."/>
            <person name="Oztas S."/>
            <person name="Petit M.A."/>
            <person name="Pichon C."/>
            <person name="Rouy Z."/>
            <person name="Ruf C.S."/>
            <person name="Schneider D."/>
            <person name="Tourret J."/>
            <person name="Vacherie B."/>
            <person name="Vallenet D."/>
            <person name="Medigue C."/>
            <person name="Rocha E.P.C."/>
            <person name="Denamur E."/>
        </authorList>
    </citation>
    <scope>NUCLEOTIDE SEQUENCE [LARGE SCALE GENOMIC DNA]</scope>
    <source>
        <strain>ED1a</strain>
    </source>
</reference>
<evidence type="ECO:0000255" key="1">
    <source>
        <dbReference type="HAMAP-Rule" id="MF_00747"/>
    </source>
</evidence>
<comment type="function">
    <text evidence="1">Bifunctional enzyme which can phosphorylate or dephosphorylate isocitrate dehydrogenase (IDH) on a specific serine residue. This is a regulatory mechanism which enables bacteria to bypass the Krebs cycle via the glyoxylate shunt in response to the source of carbon. When bacteria are grown on glucose, IDH is fully active and unphosphorylated, but when grown on acetate or ethanol, the activity of IDH declines drastically concomitant with its phosphorylation.</text>
</comment>
<comment type="catalytic activity">
    <reaction evidence="1">
        <text>L-seryl-[isocitrate dehydrogenase] + ATP = O-phospho-L-seryl-[isocitrate dehydrogenase] + ADP + H(+)</text>
        <dbReference type="Rhea" id="RHEA:43540"/>
        <dbReference type="Rhea" id="RHEA-COMP:10605"/>
        <dbReference type="Rhea" id="RHEA-COMP:10606"/>
        <dbReference type="ChEBI" id="CHEBI:15378"/>
        <dbReference type="ChEBI" id="CHEBI:29999"/>
        <dbReference type="ChEBI" id="CHEBI:30616"/>
        <dbReference type="ChEBI" id="CHEBI:83421"/>
        <dbReference type="ChEBI" id="CHEBI:456216"/>
        <dbReference type="EC" id="2.7.11.5"/>
    </reaction>
</comment>
<comment type="subcellular location">
    <subcellularLocation>
        <location evidence="1">Cytoplasm</location>
    </subcellularLocation>
</comment>
<comment type="similarity">
    <text evidence="1">Belongs to the AceK family.</text>
</comment>
<dbReference type="EC" id="2.7.11.5" evidence="1"/>
<dbReference type="EC" id="3.1.3.-" evidence="1"/>
<dbReference type="EMBL" id="CU928162">
    <property type="protein sequence ID" value="CAR10684.1"/>
    <property type="molecule type" value="Genomic_DNA"/>
</dbReference>
<dbReference type="RefSeq" id="WP_001137237.1">
    <property type="nucleotide sequence ID" value="NC_011745.1"/>
</dbReference>
<dbReference type="SMR" id="B7N2L5"/>
<dbReference type="KEGG" id="ecq:ECED1_4723"/>
<dbReference type="HOGENOM" id="CLU_033804_1_1_6"/>
<dbReference type="Proteomes" id="UP000000748">
    <property type="component" value="Chromosome"/>
</dbReference>
<dbReference type="GO" id="GO:0005737">
    <property type="term" value="C:cytoplasm"/>
    <property type="evidence" value="ECO:0007669"/>
    <property type="project" value="UniProtKB-SubCell"/>
</dbReference>
<dbReference type="GO" id="GO:0008772">
    <property type="term" value="F:[isocitrate dehydrogenase (NADP+)] kinase activity"/>
    <property type="evidence" value="ECO:0007669"/>
    <property type="project" value="UniProtKB-UniRule"/>
</dbReference>
<dbReference type="GO" id="GO:0016208">
    <property type="term" value="F:AMP binding"/>
    <property type="evidence" value="ECO:0007669"/>
    <property type="project" value="TreeGrafter"/>
</dbReference>
<dbReference type="GO" id="GO:0005524">
    <property type="term" value="F:ATP binding"/>
    <property type="evidence" value="ECO:0007669"/>
    <property type="project" value="UniProtKB-UniRule"/>
</dbReference>
<dbReference type="GO" id="GO:0004721">
    <property type="term" value="F:phosphoprotein phosphatase activity"/>
    <property type="evidence" value="ECO:0007669"/>
    <property type="project" value="UniProtKB-KW"/>
</dbReference>
<dbReference type="GO" id="GO:0004674">
    <property type="term" value="F:protein serine/threonine kinase activity"/>
    <property type="evidence" value="ECO:0007669"/>
    <property type="project" value="UniProtKB-KW"/>
</dbReference>
<dbReference type="GO" id="GO:0006006">
    <property type="term" value="P:glucose metabolic process"/>
    <property type="evidence" value="ECO:0007669"/>
    <property type="project" value="InterPro"/>
</dbReference>
<dbReference type="GO" id="GO:0006097">
    <property type="term" value="P:glyoxylate cycle"/>
    <property type="evidence" value="ECO:0007669"/>
    <property type="project" value="UniProtKB-UniRule"/>
</dbReference>
<dbReference type="GO" id="GO:0006099">
    <property type="term" value="P:tricarboxylic acid cycle"/>
    <property type="evidence" value="ECO:0007669"/>
    <property type="project" value="UniProtKB-UniRule"/>
</dbReference>
<dbReference type="HAMAP" id="MF_00747">
    <property type="entry name" value="AceK"/>
    <property type="match status" value="1"/>
</dbReference>
<dbReference type="InterPro" id="IPR046855">
    <property type="entry name" value="AceK_kinase"/>
</dbReference>
<dbReference type="InterPro" id="IPR046854">
    <property type="entry name" value="AceK_regulatory"/>
</dbReference>
<dbReference type="InterPro" id="IPR010452">
    <property type="entry name" value="Isocitrate_DH_AceK"/>
</dbReference>
<dbReference type="NCBIfam" id="NF002804">
    <property type="entry name" value="PRK02946.1"/>
    <property type="match status" value="1"/>
</dbReference>
<dbReference type="PANTHER" id="PTHR39559">
    <property type="match status" value="1"/>
</dbReference>
<dbReference type="PANTHER" id="PTHR39559:SF1">
    <property type="entry name" value="ISOCITRATE DEHYDROGENASE KINASE_PHOSPHATASE"/>
    <property type="match status" value="1"/>
</dbReference>
<dbReference type="Pfam" id="PF06315">
    <property type="entry name" value="AceK_kinase"/>
    <property type="match status" value="1"/>
</dbReference>
<dbReference type="Pfam" id="PF20423">
    <property type="entry name" value="AceK_regulatory"/>
    <property type="match status" value="1"/>
</dbReference>
<dbReference type="PIRSF" id="PIRSF000719">
    <property type="entry name" value="AceK"/>
    <property type="match status" value="1"/>
</dbReference>
<protein>
    <recommendedName>
        <fullName evidence="1">Isocitrate dehydrogenase kinase/phosphatase</fullName>
        <shortName evidence="1">IDH kinase/phosphatase</shortName>
        <shortName evidence="1">IDHK/P</shortName>
        <ecNumber evidence="1">2.7.11.5</ecNumber>
        <ecNumber evidence="1">3.1.3.-</ecNumber>
    </recommendedName>
</protein>
<gene>
    <name evidence="1" type="primary">aceK</name>
    <name type="ordered locus">ECED1_4723</name>
</gene>
<organism>
    <name type="scientific">Escherichia coli O81 (strain ED1a)</name>
    <dbReference type="NCBI Taxonomy" id="585397"/>
    <lineage>
        <taxon>Bacteria</taxon>
        <taxon>Pseudomonadati</taxon>
        <taxon>Pseudomonadota</taxon>
        <taxon>Gammaproteobacteria</taxon>
        <taxon>Enterobacterales</taxon>
        <taxon>Enterobacteriaceae</taxon>
        <taxon>Escherichia</taxon>
    </lineage>
</organism>
<accession>B7N2L5</accession>
<feature type="chain" id="PRO_1000148340" description="Isocitrate dehydrogenase kinase/phosphatase">
    <location>
        <begin position="1"/>
        <end position="574"/>
    </location>
</feature>
<feature type="active site" evidence="1">
    <location>
        <position position="371"/>
    </location>
</feature>
<feature type="binding site" evidence="1">
    <location>
        <begin position="315"/>
        <end position="321"/>
    </location>
    <ligand>
        <name>ATP</name>
        <dbReference type="ChEBI" id="CHEBI:30616"/>
    </ligand>
</feature>
<feature type="binding site" evidence="1">
    <location>
        <position position="336"/>
    </location>
    <ligand>
        <name>ATP</name>
        <dbReference type="ChEBI" id="CHEBI:30616"/>
    </ligand>
</feature>
<name>ACEK_ECO81</name>
<proteinExistence type="inferred from homology"/>
<sequence length="574" mass="67206">MPRGLELLIAQTILQGFDAQYGRFLEVTSGAQQRFEQADWHAVQQAMKNRIHLYDHHVGLVVEQLRCITNGQSTDAAFLLRVKEHYTRLLPDYPRFEIAESFFNSVYCRLFDHRSLTPERLFIFSSQPERRFRTIPRPLAKDFHPDHGWESLLMRVISDLPLRLRWQNKSRDIHYIVRHLTETLGTDNLAESHLQVANELFYRNKAAWLVGKLITPSGTLPFLLPIHQTDDGELFIDTCLTTTAEASIVFGFARSYFMVYAPLPAALVEWLREILPGKTTAELYMAIGCQKHAKTESYREYLVYLQGCNEQFIEAPGIRGMVMLVFTLPGFDRVFKVIKDRFAPQKEMSAAHVRACYQLVKEHDRVGRMADTQEFENFVLEKRHISPALMELLLQEAAEKITDLGEQIVIRHLYIERRMVPLNIWLEQVEGQQLRDAIEEYGNAIRQLAAANIFPGDMLFKNFGVTRHGRVVFYDYDEICYMTEVNFRDIPLPRYPEDELASEPWYSVSPGDVFPEEFRHWLCADPRIGPLFEEMHADLFRADYWRALQNRIREGHVEDVYAYRRRQRFSVRFV</sequence>
<keyword id="KW-0067">ATP-binding</keyword>
<keyword id="KW-0963">Cytoplasm</keyword>
<keyword id="KW-0329">Glyoxylate bypass</keyword>
<keyword id="KW-0378">Hydrolase</keyword>
<keyword id="KW-0418">Kinase</keyword>
<keyword id="KW-0547">Nucleotide-binding</keyword>
<keyword id="KW-0904">Protein phosphatase</keyword>
<keyword id="KW-0723">Serine/threonine-protein kinase</keyword>
<keyword id="KW-0808">Transferase</keyword>
<keyword id="KW-0816">Tricarboxylic acid cycle</keyword>